<comment type="function">
    <text evidence="1">Catalyzes the oxidation of 3-carboxy-2-hydroxy-4-methylpentanoate (3-isopropylmalate) to 3-carboxy-4-methyl-2-oxopentanoate. The product decarboxylates to 4-methyl-2 oxopentanoate.</text>
</comment>
<comment type="catalytic activity">
    <reaction evidence="1">
        <text>(2R,3S)-3-isopropylmalate + NAD(+) = 4-methyl-2-oxopentanoate + CO2 + NADH</text>
        <dbReference type="Rhea" id="RHEA:32271"/>
        <dbReference type="ChEBI" id="CHEBI:16526"/>
        <dbReference type="ChEBI" id="CHEBI:17865"/>
        <dbReference type="ChEBI" id="CHEBI:35121"/>
        <dbReference type="ChEBI" id="CHEBI:57540"/>
        <dbReference type="ChEBI" id="CHEBI:57945"/>
        <dbReference type="EC" id="1.1.1.85"/>
    </reaction>
</comment>
<comment type="cofactor">
    <cofactor evidence="1">
        <name>Mg(2+)</name>
        <dbReference type="ChEBI" id="CHEBI:18420"/>
    </cofactor>
    <cofactor evidence="1">
        <name>Mn(2+)</name>
        <dbReference type="ChEBI" id="CHEBI:29035"/>
    </cofactor>
    <text evidence="1">Binds 1 Mg(2+) or Mn(2+) ion per subunit.</text>
</comment>
<comment type="pathway">
    <text evidence="1">Amino-acid biosynthesis; L-leucine biosynthesis; L-leucine from 3-methyl-2-oxobutanoate: step 3/4.</text>
</comment>
<comment type="subunit">
    <text evidence="1">Homodimer.</text>
</comment>
<comment type="subcellular location">
    <subcellularLocation>
        <location evidence="1">Cytoplasm</location>
    </subcellularLocation>
</comment>
<comment type="similarity">
    <text evidence="1">Belongs to the isocitrate and isopropylmalate dehydrogenases family. LeuB type 1 subfamily.</text>
</comment>
<accession>Q7V842</accession>
<organism>
    <name type="scientific">Prochlorococcus marinus (strain MIT 9313)</name>
    <dbReference type="NCBI Taxonomy" id="74547"/>
    <lineage>
        <taxon>Bacteria</taxon>
        <taxon>Bacillati</taxon>
        <taxon>Cyanobacteriota</taxon>
        <taxon>Cyanophyceae</taxon>
        <taxon>Synechococcales</taxon>
        <taxon>Prochlorococcaceae</taxon>
        <taxon>Prochlorococcus</taxon>
    </lineage>
</organism>
<gene>
    <name evidence="1" type="primary">leuB</name>
    <name type="ordered locus">PMT_0531</name>
</gene>
<keyword id="KW-0028">Amino-acid biosynthesis</keyword>
<keyword id="KW-0100">Branched-chain amino acid biosynthesis</keyword>
<keyword id="KW-0963">Cytoplasm</keyword>
<keyword id="KW-0432">Leucine biosynthesis</keyword>
<keyword id="KW-0460">Magnesium</keyword>
<keyword id="KW-0464">Manganese</keyword>
<keyword id="KW-0479">Metal-binding</keyword>
<keyword id="KW-0520">NAD</keyword>
<keyword id="KW-0560">Oxidoreductase</keyword>
<keyword id="KW-1185">Reference proteome</keyword>
<sequence length="357" mass="37956">MRQHRIVLLPGDGIGPEITAVAKLLLDALGHQHGFKLNFEQHPIGGVAIDASGSPLPASTLEACQASDAVLLAAIGSPRFDALPREQRPETGLLSLRAGLKLFANLRPVTILPALIDASSLKANVIKGVDLMVVRELTGGIYFGQPKGRIEADGDERAFNTMTYSRTEVDRIAKVAFELARDRSGKLCSVDKANVLDVSQLWRDRVDALAANYGDVELSHMYVDNAAMQLVRNPRQFDVLLTGNLFGDILSDEAAMLTGSIGMLPSASLGSEGPGLFEPVHGSAPDIAGQDLANPMAMVLCAAMMLRIGLKENDAARALEGSVERVLAAGFRTGDLMSEGCTQLGCAEMGEQLLQAL</sequence>
<protein>
    <recommendedName>
        <fullName evidence="1">3-isopropylmalate dehydrogenase</fullName>
        <ecNumber evidence="1">1.1.1.85</ecNumber>
    </recommendedName>
    <alternativeName>
        <fullName evidence="1">3-IPM-DH</fullName>
    </alternativeName>
    <alternativeName>
        <fullName evidence="1">Beta-IPM dehydrogenase</fullName>
        <shortName evidence="1">IMDH</shortName>
    </alternativeName>
</protein>
<proteinExistence type="inferred from homology"/>
<name>LEU3_PROMM</name>
<evidence type="ECO:0000255" key="1">
    <source>
        <dbReference type="HAMAP-Rule" id="MF_01033"/>
    </source>
</evidence>
<dbReference type="EC" id="1.1.1.85" evidence="1"/>
<dbReference type="EMBL" id="BX548175">
    <property type="protein sequence ID" value="CAE20706.1"/>
    <property type="molecule type" value="Genomic_DNA"/>
</dbReference>
<dbReference type="RefSeq" id="WP_011129910.1">
    <property type="nucleotide sequence ID" value="NC_005071.1"/>
</dbReference>
<dbReference type="SMR" id="Q7V842"/>
<dbReference type="KEGG" id="pmt:PMT_0531"/>
<dbReference type="eggNOG" id="COG0473">
    <property type="taxonomic scope" value="Bacteria"/>
</dbReference>
<dbReference type="HOGENOM" id="CLU_031953_0_3_3"/>
<dbReference type="OrthoDB" id="9806254at2"/>
<dbReference type="UniPathway" id="UPA00048">
    <property type="reaction ID" value="UER00072"/>
</dbReference>
<dbReference type="Proteomes" id="UP000001423">
    <property type="component" value="Chromosome"/>
</dbReference>
<dbReference type="GO" id="GO:0005829">
    <property type="term" value="C:cytosol"/>
    <property type="evidence" value="ECO:0007669"/>
    <property type="project" value="TreeGrafter"/>
</dbReference>
<dbReference type="GO" id="GO:0003862">
    <property type="term" value="F:3-isopropylmalate dehydrogenase activity"/>
    <property type="evidence" value="ECO:0007669"/>
    <property type="project" value="UniProtKB-UniRule"/>
</dbReference>
<dbReference type="GO" id="GO:0000287">
    <property type="term" value="F:magnesium ion binding"/>
    <property type="evidence" value="ECO:0007669"/>
    <property type="project" value="InterPro"/>
</dbReference>
<dbReference type="GO" id="GO:0051287">
    <property type="term" value="F:NAD binding"/>
    <property type="evidence" value="ECO:0007669"/>
    <property type="project" value="InterPro"/>
</dbReference>
<dbReference type="GO" id="GO:0009098">
    <property type="term" value="P:L-leucine biosynthetic process"/>
    <property type="evidence" value="ECO:0007669"/>
    <property type="project" value="UniProtKB-UniRule"/>
</dbReference>
<dbReference type="FunFam" id="3.40.718.10:FF:000028">
    <property type="entry name" value="3-isopropylmalate dehydrogenase"/>
    <property type="match status" value="1"/>
</dbReference>
<dbReference type="Gene3D" id="3.40.718.10">
    <property type="entry name" value="Isopropylmalate Dehydrogenase"/>
    <property type="match status" value="1"/>
</dbReference>
<dbReference type="HAMAP" id="MF_01033">
    <property type="entry name" value="LeuB_type1"/>
    <property type="match status" value="1"/>
</dbReference>
<dbReference type="InterPro" id="IPR019818">
    <property type="entry name" value="IsoCit/isopropylmalate_DH_CS"/>
</dbReference>
<dbReference type="InterPro" id="IPR024084">
    <property type="entry name" value="IsoPropMal-DH-like_dom"/>
</dbReference>
<dbReference type="InterPro" id="IPR004429">
    <property type="entry name" value="Isopropylmalate_DH"/>
</dbReference>
<dbReference type="NCBIfam" id="TIGR00169">
    <property type="entry name" value="leuB"/>
    <property type="match status" value="1"/>
</dbReference>
<dbReference type="PANTHER" id="PTHR42979">
    <property type="entry name" value="3-ISOPROPYLMALATE DEHYDROGENASE"/>
    <property type="match status" value="1"/>
</dbReference>
<dbReference type="PANTHER" id="PTHR42979:SF1">
    <property type="entry name" value="3-ISOPROPYLMALATE DEHYDROGENASE"/>
    <property type="match status" value="1"/>
</dbReference>
<dbReference type="Pfam" id="PF00180">
    <property type="entry name" value="Iso_dh"/>
    <property type="match status" value="1"/>
</dbReference>
<dbReference type="SMART" id="SM01329">
    <property type="entry name" value="Iso_dh"/>
    <property type="match status" value="1"/>
</dbReference>
<dbReference type="SUPFAM" id="SSF53659">
    <property type="entry name" value="Isocitrate/Isopropylmalate dehydrogenase-like"/>
    <property type="match status" value="1"/>
</dbReference>
<dbReference type="PROSITE" id="PS00470">
    <property type="entry name" value="IDH_IMDH"/>
    <property type="match status" value="1"/>
</dbReference>
<reference key="1">
    <citation type="journal article" date="2003" name="Nature">
        <title>Genome divergence in two Prochlorococcus ecotypes reflects oceanic niche differentiation.</title>
        <authorList>
            <person name="Rocap G."/>
            <person name="Larimer F.W."/>
            <person name="Lamerdin J.E."/>
            <person name="Malfatti S."/>
            <person name="Chain P."/>
            <person name="Ahlgren N.A."/>
            <person name="Arellano A."/>
            <person name="Coleman M."/>
            <person name="Hauser L."/>
            <person name="Hess W.R."/>
            <person name="Johnson Z.I."/>
            <person name="Land M.L."/>
            <person name="Lindell D."/>
            <person name="Post A.F."/>
            <person name="Regala W."/>
            <person name="Shah M."/>
            <person name="Shaw S.L."/>
            <person name="Steglich C."/>
            <person name="Sullivan M.B."/>
            <person name="Ting C.S."/>
            <person name="Tolonen A."/>
            <person name="Webb E.A."/>
            <person name="Zinser E.R."/>
            <person name="Chisholm S.W."/>
        </authorList>
    </citation>
    <scope>NUCLEOTIDE SEQUENCE [LARGE SCALE GENOMIC DNA]</scope>
    <source>
        <strain>MIT 9313</strain>
    </source>
</reference>
<feature type="chain" id="PRO_0000083723" description="3-isopropylmalate dehydrogenase">
    <location>
        <begin position="1"/>
        <end position="357"/>
    </location>
</feature>
<feature type="binding site" evidence="1">
    <location>
        <position position="97"/>
    </location>
    <ligand>
        <name>substrate</name>
    </ligand>
</feature>
<feature type="binding site" evidence="1">
    <location>
        <position position="107"/>
    </location>
    <ligand>
        <name>substrate</name>
    </ligand>
</feature>
<feature type="binding site" evidence="1">
    <location>
        <position position="135"/>
    </location>
    <ligand>
        <name>substrate</name>
    </ligand>
</feature>
<feature type="binding site" evidence="1">
    <location>
        <position position="224"/>
    </location>
    <ligand>
        <name>Mg(2+)</name>
        <dbReference type="ChEBI" id="CHEBI:18420"/>
    </ligand>
</feature>
<feature type="binding site" evidence="1">
    <location>
        <position position="224"/>
    </location>
    <ligand>
        <name>substrate</name>
    </ligand>
</feature>
<feature type="binding site" evidence="1">
    <location>
        <position position="248"/>
    </location>
    <ligand>
        <name>Mg(2+)</name>
        <dbReference type="ChEBI" id="CHEBI:18420"/>
    </ligand>
</feature>
<feature type="binding site" evidence="1">
    <location>
        <position position="252"/>
    </location>
    <ligand>
        <name>Mg(2+)</name>
        <dbReference type="ChEBI" id="CHEBI:18420"/>
    </ligand>
</feature>
<feature type="binding site" evidence="1">
    <location>
        <begin position="282"/>
        <end position="294"/>
    </location>
    <ligand>
        <name>NAD(+)</name>
        <dbReference type="ChEBI" id="CHEBI:57540"/>
    </ligand>
</feature>
<feature type="site" description="Important for catalysis" evidence="1">
    <location>
        <position position="142"/>
    </location>
</feature>
<feature type="site" description="Important for catalysis" evidence="1">
    <location>
        <position position="192"/>
    </location>
</feature>